<dbReference type="EMBL" id="AE005174">
    <property type="protein sequence ID" value="AAG57183.1"/>
    <property type="molecule type" value="Genomic_DNA"/>
</dbReference>
<dbReference type="PIR" id="C85840">
    <property type="entry name" value="C85840"/>
</dbReference>
<dbReference type="KEGG" id="ece:Z3290"/>
<dbReference type="PATRIC" id="fig|83334.175.peg.1045"/>
<dbReference type="Proteomes" id="UP000002519">
    <property type="component" value="Chromosome"/>
</dbReference>
<dbReference type="GO" id="GO:0016020">
    <property type="term" value="C:membrane"/>
    <property type="evidence" value="ECO:0007669"/>
    <property type="project" value="UniProtKB-SubCell"/>
</dbReference>
<gene>
    <name evidence="3" type="primary">zorP</name>
    <name type="ordered locus">Z3290</name>
</gene>
<organism>
    <name type="scientific">Escherichia coli O157:H7</name>
    <dbReference type="NCBI Taxonomy" id="83334"/>
    <lineage>
        <taxon>Bacteria</taxon>
        <taxon>Pseudomonadati</taxon>
        <taxon>Pseudomonadota</taxon>
        <taxon>Gammaproteobacteria</taxon>
        <taxon>Enterobacterales</taxon>
        <taxon>Enterobacteriaceae</taxon>
        <taxon>Escherichia</taxon>
    </lineage>
</organism>
<name>ZORP_ECO57</name>
<protein>
    <recommendedName>
        <fullName evidence="3">Small toxic protein ZorP</fullName>
    </recommendedName>
</protein>
<comment type="function">
    <text evidence="2 4">Toxic component of a type I toxin-antitoxin (TA) system. Overexpression leads to cell stasis and a decrease in colony-forming units (PubMed:20156992). Probably repressed by cognate small RNA orzP. Base pairing occurs between 18 bases in the 5' UTR of zorP mRNA and the 5' end of OrzP sRNA (Probable).</text>
</comment>
<comment type="subcellular location">
    <subcellularLocation>
        <location evidence="1">Membrane</location>
        <topology evidence="1">Single-pass membrane protein</topology>
    </subcellularLocation>
</comment>
<comment type="induction">
    <text evidence="2">Expressed during exponential growth in rich medium and at lower levels in exponential and stationary phase in minimal medium (zorO mRNA cannot be distinguished from zorP mRNA by these assays as they are practically identical).</text>
</comment>
<proteinExistence type="evidence at protein level"/>
<accession>Q8X3T6</accession>
<sequence length="29" mass="3249">MDSLTQKLTVLIAVLELLVALLRLIDLLK</sequence>
<keyword id="KW-0472">Membrane</keyword>
<keyword id="KW-0812">Transmembrane</keyword>
<keyword id="KW-1133">Transmembrane helix</keyword>
<feature type="chain" id="PRO_0000450223" description="Small toxic protein ZorP">
    <location>
        <begin position="1"/>
        <end position="29"/>
    </location>
</feature>
<feature type="transmembrane region" description="Helical" evidence="1">
    <location>
        <begin position="10"/>
        <end position="27"/>
    </location>
</feature>
<evidence type="ECO:0000255" key="1"/>
<evidence type="ECO:0000269" key="2">
    <source>
    </source>
</evidence>
<evidence type="ECO:0000303" key="3">
    <source>
    </source>
</evidence>
<evidence type="ECO:0000305" key="4">
    <source>
    </source>
</evidence>
<reference key="1">
    <citation type="journal article" date="2001" name="Nature">
        <title>Genome sequence of enterohaemorrhagic Escherichia coli O157:H7.</title>
        <authorList>
            <person name="Perna N.T."/>
            <person name="Plunkett G. III"/>
            <person name="Burland V."/>
            <person name="Mau B."/>
            <person name="Glasner J.D."/>
            <person name="Rose D.J."/>
            <person name="Mayhew G.F."/>
            <person name="Evans P.S."/>
            <person name="Gregor J."/>
            <person name="Kirkpatrick H.A."/>
            <person name="Posfai G."/>
            <person name="Hackett J."/>
            <person name="Klink S."/>
            <person name="Boutin A."/>
            <person name="Shao Y."/>
            <person name="Miller L."/>
            <person name="Grotbeck E.J."/>
            <person name="Davis N.W."/>
            <person name="Lim A."/>
            <person name="Dimalanta E.T."/>
            <person name="Potamousis K."/>
            <person name="Apodaca J."/>
            <person name="Anantharaman T.S."/>
            <person name="Lin J."/>
            <person name="Yen G."/>
            <person name="Schwartz D.C."/>
            <person name="Welch R.A."/>
            <person name="Blattner F.R."/>
        </authorList>
    </citation>
    <scope>NUCLEOTIDE SEQUENCE [LARGE SCALE GENOMIC DNA]</scope>
    <source>
        <strain>O157:H7 / EDL933 / ATCC 700927 / EHEC</strain>
    </source>
</reference>
<reference key="2">
    <citation type="journal article" date="2010" name="Nucleic Acids Res.">
        <title>Abundance of type I toxin-antitoxin systems in bacteria: searches for new candidates and discovery of novel families.</title>
        <authorList>
            <person name="Fozo E.M."/>
            <person name="Makarova K.S."/>
            <person name="Shabalina S.A."/>
            <person name="Yutin N."/>
            <person name="Koonin E.V."/>
            <person name="Storz G."/>
        </authorList>
    </citation>
    <scope>IDENTIFICATION</scope>
    <scope>FUNCTION AS A TOXIN</scope>
    <scope>INDUCTION</scope>
    <source>
        <strain>O157:H7 / EDL933 / ATCC 700927 / EHEC</strain>
    </source>
</reference>
<reference key="3">
    <citation type="journal article" date="2014" name="Nucleic Acids Res.">
        <title>The ZorO-OrzO type I toxin-antitoxin locus: repression by the OrzO antitoxin.</title>
        <authorList>
            <person name="Wen J."/>
            <person name="Won D."/>
            <person name="Fozo E.M."/>
        </authorList>
    </citation>
    <scope>DISCUSSION OF SEQUENCE</scope>
    <source>
        <strain>O157:H7 / EDL933 / ATCC 700927 / EHEC</strain>
    </source>
</reference>